<name>RL35_RHORT</name>
<evidence type="ECO:0000255" key="1">
    <source>
        <dbReference type="HAMAP-Rule" id="MF_00514"/>
    </source>
</evidence>
<evidence type="ECO:0000305" key="2"/>
<keyword id="KW-1185">Reference proteome</keyword>
<keyword id="KW-0687">Ribonucleoprotein</keyword>
<keyword id="KW-0689">Ribosomal protein</keyword>
<reference key="1">
    <citation type="journal article" date="2011" name="Stand. Genomic Sci.">
        <title>Complete genome sequence of Rhodospirillum rubrum type strain (S1).</title>
        <authorList>
            <person name="Munk A.C."/>
            <person name="Copeland A."/>
            <person name="Lucas S."/>
            <person name="Lapidus A."/>
            <person name="Del Rio T.G."/>
            <person name="Barry K."/>
            <person name="Detter J.C."/>
            <person name="Hammon N."/>
            <person name="Israni S."/>
            <person name="Pitluck S."/>
            <person name="Brettin T."/>
            <person name="Bruce D."/>
            <person name="Han C."/>
            <person name="Tapia R."/>
            <person name="Gilna P."/>
            <person name="Schmutz J."/>
            <person name="Larimer F."/>
            <person name="Land M."/>
            <person name="Kyrpides N.C."/>
            <person name="Mavromatis K."/>
            <person name="Richardson P."/>
            <person name="Rohde M."/>
            <person name="Goeker M."/>
            <person name="Klenk H.P."/>
            <person name="Zhang Y."/>
            <person name="Roberts G.P."/>
            <person name="Reslewic S."/>
            <person name="Schwartz D.C."/>
        </authorList>
    </citation>
    <scope>NUCLEOTIDE SEQUENCE [LARGE SCALE GENOMIC DNA]</scope>
    <source>
        <strain>ATCC 11170 / ATH 1.1.1 / DSM 467 / LMG 4362 / NCIMB 8255 / S1</strain>
    </source>
</reference>
<proteinExistence type="inferred from homology"/>
<feature type="chain" id="PRO_0000258741" description="Large ribosomal subunit protein bL35">
    <location>
        <begin position="1"/>
        <end position="65"/>
    </location>
</feature>
<protein>
    <recommendedName>
        <fullName evidence="1">Large ribosomal subunit protein bL35</fullName>
    </recommendedName>
    <alternativeName>
        <fullName evidence="2">50S ribosomal protein L35</fullName>
    </alternativeName>
</protein>
<accession>Q2RNI0</accession>
<dbReference type="EMBL" id="CP000230">
    <property type="protein sequence ID" value="ABC24315.1"/>
    <property type="molecule type" value="Genomic_DNA"/>
</dbReference>
<dbReference type="RefSeq" id="WP_011391268.1">
    <property type="nucleotide sequence ID" value="NC_007643.1"/>
</dbReference>
<dbReference type="RefSeq" id="YP_428602.1">
    <property type="nucleotide sequence ID" value="NC_007643.1"/>
</dbReference>
<dbReference type="SMR" id="Q2RNI0"/>
<dbReference type="STRING" id="269796.Rru_A3521"/>
<dbReference type="EnsemblBacteria" id="ABC24315">
    <property type="protein sequence ID" value="ABC24315"/>
    <property type="gene ID" value="Rru_A3521"/>
</dbReference>
<dbReference type="KEGG" id="rru:Rru_A3521"/>
<dbReference type="PATRIC" id="fig|269796.9.peg.3638"/>
<dbReference type="eggNOG" id="COG0291">
    <property type="taxonomic scope" value="Bacteria"/>
</dbReference>
<dbReference type="HOGENOM" id="CLU_169643_2_1_5"/>
<dbReference type="PhylomeDB" id="Q2RNI0"/>
<dbReference type="Proteomes" id="UP000001929">
    <property type="component" value="Chromosome"/>
</dbReference>
<dbReference type="GO" id="GO:0022625">
    <property type="term" value="C:cytosolic large ribosomal subunit"/>
    <property type="evidence" value="ECO:0007669"/>
    <property type="project" value="TreeGrafter"/>
</dbReference>
<dbReference type="GO" id="GO:0003735">
    <property type="term" value="F:structural constituent of ribosome"/>
    <property type="evidence" value="ECO:0007669"/>
    <property type="project" value="InterPro"/>
</dbReference>
<dbReference type="GO" id="GO:0006412">
    <property type="term" value="P:translation"/>
    <property type="evidence" value="ECO:0007669"/>
    <property type="project" value="UniProtKB-UniRule"/>
</dbReference>
<dbReference type="FunFam" id="4.10.410.60:FF:000001">
    <property type="entry name" value="50S ribosomal protein L35"/>
    <property type="match status" value="1"/>
</dbReference>
<dbReference type="Gene3D" id="4.10.410.60">
    <property type="match status" value="1"/>
</dbReference>
<dbReference type="HAMAP" id="MF_00514">
    <property type="entry name" value="Ribosomal_bL35"/>
    <property type="match status" value="1"/>
</dbReference>
<dbReference type="InterPro" id="IPR001706">
    <property type="entry name" value="Ribosomal_bL35"/>
</dbReference>
<dbReference type="InterPro" id="IPR021137">
    <property type="entry name" value="Ribosomal_bL35-like"/>
</dbReference>
<dbReference type="InterPro" id="IPR018265">
    <property type="entry name" value="Ribosomal_bL35_CS"/>
</dbReference>
<dbReference type="InterPro" id="IPR037229">
    <property type="entry name" value="Ribosomal_bL35_sf"/>
</dbReference>
<dbReference type="NCBIfam" id="TIGR00001">
    <property type="entry name" value="rpmI_bact"/>
    <property type="match status" value="1"/>
</dbReference>
<dbReference type="PANTHER" id="PTHR33343">
    <property type="entry name" value="54S RIBOSOMAL PROTEIN BL35M"/>
    <property type="match status" value="1"/>
</dbReference>
<dbReference type="PANTHER" id="PTHR33343:SF1">
    <property type="entry name" value="LARGE RIBOSOMAL SUBUNIT PROTEIN BL35M"/>
    <property type="match status" value="1"/>
</dbReference>
<dbReference type="Pfam" id="PF01632">
    <property type="entry name" value="Ribosomal_L35p"/>
    <property type="match status" value="1"/>
</dbReference>
<dbReference type="PRINTS" id="PR00064">
    <property type="entry name" value="RIBOSOMALL35"/>
</dbReference>
<dbReference type="SUPFAM" id="SSF143034">
    <property type="entry name" value="L35p-like"/>
    <property type="match status" value="1"/>
</dbReference>
<dbReference type="PROSITE" id="PS00936">
    <property type="entry name" value="RIBOSOMAL_L35"/>
    <property type="match status" value="1"/>
</dbReference>
<gene>
    <name evidence="1" type="primary">rpmI</name>
    <name type="ordered locus">Rru_A3521</name>
</gene>
<sequence>MPKLKTKSAVKKRFSLTGTGKIKVKVAYKSHLLSNKGTKMKRQARGTFILCDADQRIVKKFMPYG</sequence>
<organism>
    <name type="scientific">Rhodospirillum rubrum (strain ATCC 11170 / ATH 1.1.1 / DSM 467 / LMG 4362 / NCIMB 8255 / S1)</name>
    <dbReference type="NCBI Taxonomy" id="269796"/>
    <lineage>
        <taxon>Bacteria</taxon>
        <taxon>Pseudomonadati</taxon>
        <taxon>Pseudomonadota</taxon>
        <taxon>Alphaproteobacteria</taxon>
        <taxon>Rhodospirillales</taxon>
        <taxon>Rhodospirillaceae</taxon>
        <taxon>Rhodospirillum</taxon>
    </lineage>
</organism>
<comment type="similarity">
    <text evidence="1">Belongs to the bacterial ribosomal protein bL35 family.</text>
</comment>